<proteinExistence type="inferred from homology"/>
<feature type="chain" id="PRO_0000298735" description="Pyrimidine/purine nucleoside phosphorylase">
    <location>
        <begin position="1"/>
        <end position="95"/>
    </location>
</feature>
<keyword id="KW-0328">Glycosyltransferase</keyword>
<keyword id="KW-0808">Transferase</keyword>
<name>PPNP_YERE8</name>
<dbReference type="EC" id="2.4.2.1" evidence="1"/>
<dbReference type="EC" id="2.4.2.2" evidence="1"/>
<dbReference type="EMBL" id="AM286415">
    <property type="protein sequence ID" value="CAL13219.1"/>
    <property type="molecule type" value="Genomic_DNA"/>
</dbReference>
<dbReference type="RefSeq" id="WP_005160560.1">
    <property type="nucleotide sequence ID" value="NC_008800.1"/>
</dbReference>
<dbReference type="RefSeq" id="YP_001007364.1">
    <property type="nucleotide sequence ID" value="NC_008800.1"/>
</dbReference>
<dbReference type="SMR" id="A1JNV1"/>
<dbReference type="GeneID" id="93971861"/>
<dbReference type="KEGG" id="yen:YE3187"/>
<dbReference type="PATRIC" id="fig|393305.7.peg.3388"/>
<dbReference type="eggNOG" id="COG3123">
    <property type="taxonomic scope" value="Bacteria"/>
</dbReference>
<dbReference type="HOGENOM" id="CLU_157874_0_0_6"/>
<dbReference type="OrthoDB" id="9793848at2"/>
<dbReference type="Proteomes" id="UP000000642">
    <property type="component" value="Chromosome"/>
</dbReference>
<dbReference type="GO" id="GO:0005829">
    <property type="term" value="C:cytosol"/>
    <property type="evidence" value="ECO:0007669"/>
    <property type="project" value="TreeGrafter"/>
</dbReference>
<dbReference type="GO" id="GO:0047975">
    <property type="term" value="F:guanosine phosphorylase activity"/>
    <property type="evidence" value="ECO:0007669"/>
    <property type="project" value="UniProtKB-EC"/>
</dbReference>
<dbReference type="GO" id="GO:0004731">
    <property type="term" value="F:purine-nucleoside phosphorylase activity"/>
    <property type="evidence" value="ECO:0007669"/>
    <property type="project" value="UniProtKB-UniRule"/>
</dbReference>
<dbReference type="GO" id="GO:0009032">
    <property type="term" value="F:thymidine phosphorylase activity"/>
    <property type="evidence" value="ECO:0007669"/>
    <property type="project" value="UniProtKB-EC"/>
</dbReference>
<dbReference type="GO" id="GO:0004850">
    <property type="term" value="F:uridine phosphorylase activity"/>
    <property type="evidence" value="ECO:0007669"/>
    <property type="project" value="UniProtKB-EC"/>
</dbReference>
<dbReference type="FunFam" id="2.60.120.10:FF:000016">
    <property type="entry name" value="Pyrimidine/purine nucleoside phosphorylase"/>
    <property type="match status" value="1"/>
</dbReference>
<dbReference type="Gene3D" id="2.60.120.10">
    <property type="entry name" value="Jelly Rolls"/>
    <property type="match status" value="1"/>
</dbReference>
<dbReference type="HAMAP" id="MF_01537">
    <property type="entry name" value="Nucleos_phosphorylase_PpnP"/>
    <property type="match status" value="1"/>
</dbReference>
<dbReference type="InterPro" id="IPR009664">
    <property type="entry name" value="Ppnp"/>
</dbReference>
<dbReference type="InterPro" id="IPR014710">
    <property type="entry name" value="RmlC-like_jellyroll"/>
</dbReference>
<dbReference type="InterPro" id="IPR011051">
    <property type="entry name" value="RmlC_Cupin_sf"/>
</dbReference>
<dbReference type="NCBIfam" id="NF007875">
    <property type="entry name" value="PRK10579.1"/>
    <property type="match status" value="1"/>
</dbReference>
<dbReference type="PANTHER" id="PTHR36540">
    <property type="entry name" value="PYRIMIDINE/PURINE NUCLEOSIDE PHOSPHORYLASE"/>
    <property type="match status" value="1"/>
</dbReference>
<dbReference type="PANTHER" id="PTHR36540:SF1">
    <property type="entry name" value="PYRIMIDINE_PURINE NUCLEOSIDE PHOSPHORYLASE"/>
    <property type="match status" value="1"/>
</dbReference>
<dbReference type="Pfam" id="PF06865">
    <property type="entry name" value="Ppnp"/>
    <property type="match status" value="1"/>
</dbReference>
<dbReference type="SUPFAM" id="SSF51182">
    <property type="entry name" value="RmlC-like cupins"/>
    <property type="match status" value="1"/>
</dbReference>
<accession>A1JNV1</accession>
<reference key="1">
    <citation type="journal article" date="2006" name="PLoS Genet.">
        <title>The complete genome sequence and comparative genome analysis of the high pathogenicity Yersinia enterocolitica strain 8081.</title>
        <authorList>
            <person name="Thomson N.R."/>
            <person name="Howard S."/>
            <person name="Wren B.W."/>
            <person name="Holden M.T.G."/>
            <person name="Crossman L."/>
            <person name="Challis G.L."/>
            <person name="Churcher C."/>
            <person name="Mungall K."/>
            <person name="Brooks K."/>
            <person name="Chillingworth T."/>
            <person name="Feltwell T."/>
            <person name="Abdellah Z."/>
            <person name="Hauser H."/>
            <person name="Jagels K."/>
            <person name="Maddison M."/>
            <person name="Moule S."/>
            <person name="Sanders M."/>
            <person name="Whitehead S."/>
            <person name="Quail M.A."/>
            <person name="Dougan G."/>
            <person name="Parkhill J."/>
            <person name="Prentice M.B."/>
        </authorList>
    </citation>
    <scope>NUCLEOTIDE SEQUENCE [LARGE SCALE GENOMIC DNA]</scope>
    <source>
        <strain>NCTC 13174 / 8081</strain>
    </source>
</reference>
<organism>
    <name type="scientific">Yersinia enterocolitica serotype O:8 / biotype 1B (strain NCTC 13174 / 8081)</name>
    <dbReference type="NCBI Taxonomy" id="393305"/>
    <lineage>
        <taxon>Bacteria</taxon>
        <taxon>Pseudomonadati</taxon>
        <taxon>Pseudomonadota</taxon>
        <taxon>Gammaproteobacteria</taxon>
        <taxon>Enterobacterales</taxon>
        <taxon>Yersiniaceae</taxon>
        <taxon>Yersinia</taxon>
    </lineage>
</organism>
<protein>
    <recommendedName>
        <fullName evidence="1">Pyrimidine/purine nucleoside phosphorylase</fullName>
        <ecNumber evidence="1">2.4.2.1</ecNumber>
        <ecNumber evidence="1">2.4.2.2</ecNumber>
    </recommendedName>
    <alternativeName>
        <fullName evidence="1">Adenosine phosphorylase</fullName>
    </alternativeName>
    <alternativeName>
        <fullName evidence="1">Cytidine phosphorylase</fullName>
    </alternativeName>
    <alternativeName>
        <fullName evidence="1">Guanosine phosphorylase</fullName>
    </alternativeName>
    <alternativeName>
        <fullName evidence="1">Inosine phosphorylase</fullName>
    </alternativeName>
    <alternativeName>
        <fullName evidence="1">Thymidine phosphorylase</fullName>
    </alternativeName>
    <alternativeName>
        <fullName evidence="1">Uridine phosphorylase</fullName>
    </alternativeName>
    <alternativeName>
        <fullName evidence="1">Xanthosine phosphorylase</fullName>
    </alternativeName>
</protein>
<evidence type="ECO:0000255" key="1">
    <source>
        <dbReference type="HAMAP-Rule" id="MF_01537"/>
    </source>
</evidence>
<sequence>MLKFNEYFTGKVKSIGFDSDSIGQASVGVMEKGEYTFSTAKPEEMTVITGSLKVLIPGSSGWEVFNPGETFYVPANSEFNLQVAEASSYLCKYLS</sequence>
<gene>
    <name evidence="1" type="primary">ppnP</name>
    <name type="ordered locus">YE3187</name>
</gene>
<comment type="function">
    <text evidence="1">Catalyzes the phosphorolysis of diverse nucleosides, yielding D-ribose 1-phosphate and the respective free bases. Can use uridine, adenosine, guanosine, cytidine, thymidine, inosine and xanthosine as substrates. Also catalyzes the reverse reactions.</text>
</comment>
<comment type="catalytic activity">
    <reaction evidence="1">
        <text>a purine D-ribonucleoside + phosphate = a purine nucleobase + alpha-D-ribose 1-phosphate</text>
        <dbReference type="Rhea" id="RHEA:19805"/>
        <dbReference type="ChEBI" id="CHEBI:26386"/>
        <dbReference type="ChEBI" id="CHEBI:43474"/>
        <dbReference type="ChEBI" id="CHEBI:57720"/>
        <dbReference type="ChEBI" id="CHEBI:142355"/>
        <dbReference type="EC" id="2.4.2.1"/>
    </reaction>
</comment>
<comment type="catalytic activity">
    <reaction evidence="1">
        <text>adenosine + phosphate = alpha-D-ribose 1-phosphate + adenine</text>
        <dbReference type="Rhea" id="RHEA:27642"/>
        <dbReference type="ChEBI" id="CHEBI:16335"/>
        <dbReference type="ChEBI" id="CHEBI:16708"/>
        <dbReference type="ChEBI" id="CHEBI:43474"/>
        <dbReference type="ChEBI" id="CHEBI:57720"/>
        <dbReference type="EC" id="2.4.2.1"/>
    </reaction>
</comment>
<comment type="catalytic activity">
    <reaction evidence="1">
        <text>cytidine + phosphate = cytosine + alpha-D-ribose 1-phosphate</text>
        <dbReference type="Rhea" id="RHEA:52540"/>
        <dbReference type="ChEBI" id="CHEBI:16040"/>
        <dbReference type="ChEBI" id="CHEBI:17562"/>
        <dbReference type="ChEBI" id="CHEBI:43474"/>
        <dbReference type="ChEBI" id="CHEBI:57720"/>
        <dbReference type="EC" id="2.4.2.2"/>
    </reaction>
</comment>
<comment type="catalytic activity">
    <reaction evidence="1">
        <text>guanosine + phosphate = alpha-D-ribose 1-phosphate + guanine</text>
        <dbReference type="Rhea" id="RHEA:13233"/>
        <dbReference type="ChEBI" id="CHEBI:16235"/>
        <dbReference type="ChEBI" id="CHEBI:16750"/>
        <dbReference type="ChEBI" id="CHEBI:43474"/>
        <dbReference type="ChEBI" id="CHEBI:57720"/>
        <dbReference type="EC" id="2.4.2.1"/>
    </reaction>
</comment>
<comment type="catalytic activity">
    <reaction evidence="1">
        <text>inosine + phosphate = alpha-D-ribose 1-phosphate + hypoxanthine</text>
        <dbReference type="Rhea" id="RHEA:27646"/>
        <dbReference type="ChEBI" id="CHEBI:17368"/>
        <dbReference type="ChEBI" id="CHEBI:17596"/>
        <dbReference type="ChEBI" id="CHEBI:43474"/>
        <dbReference type="ChEBI" id="CHEBI:57720"/>
        <dbReference type="EC" id="2.4.2.1"/>
    </reaction>
</comment>
<comment type="catalytic activity">
    <reaction evidence="1">
        <text>thymidine + phosphate = 2-deoxy-alpha-D-ribose 1-phosphate + thymine</text>
        <dbReference type="Rhea" id="RHEA:16037"/>
        <dbReference type="ChEBI" id="CHEBI:17748"/>
        <dbReference type="ChEBI" id="CHEBI:17821"/>
        <dbReference type="ChEBI" id="CHEBI:43474"/>
        <dbReference type="ChEBI" id="CHEBI:57259"/>
        <dbReference type="EC" id="2.4.2.2"/>
    </reaction>
</comment>
<comment type="catalytic activity">
    <reaction evidence="1">
        <text>uridine + phosphate = alpha-D-ribose 1-phosphate + uracil</text>
        <dbReference type="Rhea" id="RHEA:24388"/>
        <dbReference type="ChEBI" id="CHEBI:16704"/>
        <dbReference type="ChEBI" id="CHEBI:17568"/>
        <dbReference type="ChEBI" id="CHEBI:43474"/>
        <dbReference type="ChEBI" id="CHEBI:57720"/>
        <dbReference type="EC" id="2.4.2.2"/>
    </reaction>
</comment>
<comment type="catalytic activity">
    <reaction evidence="1">
        <text>xanthosine + phosphate = alpha-D-ribose 1-phosphate + xanthine</text>
        <dbReference type="Rhea" id="RHEA:27638"/>
        <dbReference type="ChEBI" id="CHEBI:17712"/>
        <dbReference type="ChEBI" id="CHEBI:18107"/>
        <dbReference type="ChEBI" id="CHEBI:43474"/>
        <dbReference type="ChEBI" id="CHEBI:57720"/>
        <dbReference type="EC" id="2.4.2.1"/>
    </reaction>
</comment>
<comment type="similarity">
    <text evidence="1">Belongs to the nucleoside phosphorylase PpnP family.</text>
</comment>